<organism>
    <name type="scientific">Prochlorococcus marinus (strain MIT 9301)</name>
    <dbReference type="NCBI Taxonomy" id="167546"/>
    <lineage>
        <taxon>Bacteria</taxon>
        <taxon>Bacillati</taxon>
        <taxon>Cyanobacteriota</taxon>
        <taxon>Cyanophyceae</taxon>
        <taxon>Synechococcales</taxon>
        <taxon>Prochlorococcaceae</taxon>
        <taxon>Prochlorococcus</taxon>
    </lineage>
</organism>
<accession>A3PF46</accession>
<gene>
    <name evidence="1" type="primary">rplD</name>
    <name evidence="1" type="synonym">rpl4</name>
    <name type="ordered locus">P9301_17481</name>
</gene>
<evidence type="ECO:0000255" key="1">
    <source>
        <dbReference type="HAMAP-Rule" id="MF_01328"/>
    </source>
</evidence>
<evidence type="ECO:0000256" key="2">
    <source>
        <dbReference type="SAM" id="MobiDB-lite"/>
    </source>
</evidence>
<evidence type="ECO:0000305" key="3"/>
<protein>
    <recommendedName>
        <fullName evidence="1">Large ribosomal subunit protein uL4</fullName>
    </recommendedName>
    <alternativeName>
        <fullName evidence="3">50S ribosomal protein L4</fullName>
    </alternativeName>
</protein>
<reference key="1">
    <citation type="journal article" date="2007" name="PLoS Genet.">
        <title>Patterns and implications of gene gain and loss in the evolution of Prochlorococcus.</title>
        <authorList>
            <person name="Kettler G.C."/>
            <person name="Martiny A.C."/>
            <person name="Huang K."/>
            <person name="Zucker J."/>
            <person name="Coleman M.L."/>
            <person name="Rodrigue S."/>
            <person name="Chen F."/>
            <person name="Lapidus A."/>
            <person name="Ferriera S."/>
            <person name="Johnson J."/>
            <person name="Steglich C."/>
            <person name="Church G.M."/>
            <person name="Richardson P."/>
            <person name="Chisholm S.W."/>
        </authorList>
    </citation>
    <scope>NUCLEOTIDE SEQUENCE [LARGE SCALE GENOMIC DNA]</scope>
    <source>
        <strain>MIT 9301</strain>
    </source>
</reference>
<sequence length="210" mass="23032">MTTLETLKWDGKKSGKVSLDLAVAKKTSSADLIHRAVLRQLANKRQGTASTLTRSEVRGGGRKPYKQKGTGRARQGSIRTPLRPGGGIIFGPKPRSYNLDMNRKERRLALRTALMSRVSDIKAVEDFGSTLKQPKTSDIINGLARLGIQKTEKVLVILDSPSDIIKKSINNIEKVKLIAADQLNVFDILNANKLVIGQSAIDKIQEVYAS</sequence>
<dbReference type="EMBL" id="CP000576">
    <property type="protein sequence ID" value="ABO18371.1"/>
    <property type="molecule type" value="Genomic_DNA"/>
</dbReference>
<dbReference type="RefSeq" id="WP_011863659.1">
    <property type="nucleotide sequence ID" value="NC_009091.1"/>
</dbReference>
<dbReference type="SMR" id="A3PF46"/>
<dbReference type="STRING" id="167546.P9301_17481"/>
<dbReference type="KEGG" id="pmg:P9301_17481"/>
<dbReference type="eggNOG" id="COG0088">
    <property type="taxonomic scope" value="Bacteria"/>
</dbReference>
<dbReference type="HOGENOM" id="CLU_041575_5_2_3"/>
<dbReference type="OrthoDB" id="9803201at2"/>
<dbReference type="Proteomes" id="UP000001430">
    <property type="component" value="Chromosome"/>
</dbReference>
<dbReference type="GO" id="GO:1990904">
    <property type="term" value="C:ribonucleoprotein complex"/>
    <property type="evidence" value="ECO:0007669"/>
    <property type="project" value="UniProtKB-KW"/>
</dbReference>
<dbReference type="GO" id="GO:0005840">
    <property type="term" value="C:ribosome"/>
    <property type="evidence" value="ECO:0007669"/>
    <property type="project" value="UniProtKB-KW"/>
</dbReference>
<dbReference type="GO" id="GO:0019843">
    <property type="term" value="F:rRNA binding"/>
    <property type="evidence" value="ECO:0007669"/>
    <property type="project" value="UniProtKB-UniRule"/>
</dbReference>
<dbReference type="GO" id="GO:0003735">
    <property type="term" value="F:structural constituent of ribosome"/>
    <property type="evidence" value="ECO:0007669"/>
    <property type="project" value="InterPro"/>
</dbReference>
<dbReference type="GO" id="GO:0006412">
    <property type="term" value="P:translation"/>
    <property type="evidence" value="ECO:0007669"/>
    <property type="project" value="UniProtKB-UniRule"/>
</dbReference>
<dbReference type="Gene3D" id="3.40.1370.10">
    <property type="match status" value="1"/>
</dbReference>
<dbReference type="HAMAP" id="MF_01328_B">
    <property type="entry name" value="Ribosomal_uL4_B"/>
    <property type="match status" value="1"/>
</dbReference>
<dbReference type="InterPro" id="IPR002136">
    <property type="entry name" value="Ribosomal_uL4"/>
</dbReference>
<dbReference type="InterPro" id="IPR013005">
    <property type="entry name" value="Ribosomal_uL4-like"/>
</dbReference>
<dbReference type="InterPro" id="IPR023574">
    <property type="entry name" value="Ribosomal_uL4_dom_sf"/>
</dbReference>
<dbReference type="NCBIfam" id="TIGR03953">
    <property type="entry name" value="rplD_bact"/>
    <property type="match status" value="1"/>
</dbReference>
<dbReference type="PANTHER" id="PTHR10746">
    <property type="entry name" value="50S RIBOSOMAL PROTEIN L4"/>
    <property type="match status" value="1"/>
</dbReference>
<dbReference type="PANTHER" id="PTHR10746:SF17">
    <property type="entry name" value="LARGE RIBOSOMAL SUBUNIT PROTEIN UL4C"/>
    <property type="match status" value="1"/>
</dbReference>
<dbReference type="Pfam" id="PF00573">
    <property type="entry name" value="Ribosomal_L4"/>
    <property type="match status" value="1"/>
</dbReference>
<dbReference type="SUPFAM" id="SSF52166">
    <property type="entry name" value="Ribosomal protein L4"/>
    <property type="match status" value="1"/>
</dbReference>
<proteinExistence type="inferred from homology"/>
<feature type="chain" id="PRO_1000052464" description="Large ribosomal subunit protein uL4">
    <location>
        <begin position="1"/>
        <end position="210"/>
    </location>
</feature>
<feature type="region of interest" description="Disordered" evidence="2">
    <location>
        <begin position="44"/>
        <end position="85"/>
    </location>
</feature>
<feature type="compositionally biased region" description="Polar residues" evidence="2">
    <location>
        <begin position="44"/>
        <end position="54"/>
    </location>
</feature>
<feature type="compositionally biased region" description="Basic residues" evidence="2">
    <location>
        <begin position="60"/>
        <end position="71"/>
    </location>
</feature>
<comment type="function">
    <text evidence="1">One of the primary rRNA binding proteins, this protein initially binds near the 5'-end of the 23S rRNA. It is important during the early stages of 50S assembly. It makes multiple contacts with different domains of the 23S rRNA in the assembled 50S subunit and ribosome.</text>
</comment>
<comment type="function">
    <text evidence="1">Forms part of the polypeptide exit tunnel.</text>
</comment>
<comment type="subunit">
    <text evidence="1">Part of the 50S ribosomal subunit.</text>
</comment>
<comment type="similarity">
    <text evidence="1">Belongs to the universal ribosomal protein uL4 family.</text>
</comment>
<name>RL4_PROM0</name>
<keyword id="KW-1185">Reference proteome</keyword>
<keyword id="KW-0687">Ribonucleoprotein</keyword>
<keyword id="KW-0689">Ribosomal protein</keyword>
<keyword id="KW-0694">RNA-binding</keyword>
<keyword id="KW-0699">rRNA-binding</keyword>